<accession>C6DDH0</accession>
<evidence type="ECO:0000255" key="1">
    <source>
        <dbReference type="HAMAP-Rule" id="MF_00064"/>
    </source>
</evidence>
<dbReference type="EC" id="2.7.7.4" evidence="1"/>
<dbReference type="EMBL" id="CP001657">
    <property type="protein sequence ID" value="ACT14377.1"/>
    <property type="molecule type" value="Genomic_DNA"/>
</dbReference>
<dbReference type="RefSeq" id="WP_015841507.1">
    <property type="nucleotide sequence ID" value="NC_012917.1"/>
</dbReference>
<dbReference type="SMR" id="C6DDH0"/>
<dbReference type="STRING" id="561230.PC1_3361"/>
<dbReference type="GeneID" id="67792833"/>
<dbReference type="KEGG" id="pct:PC1_3361"/>
<dbReference type="eggNOG" id="COG0175">
    <property type="taxonomic scope" value="Bacteria"/>
</dbReference>
<dbReference type="HOGENOM" id="CLU_043026_0_0_6"/>
<dbReference type="OrthoDB" id="9772604at2"/>
<dbReference type="UniPathway" id="UPA00140">
    <property type="reaction ID" value="UER00204"/>
</dbReference>
<dbReference type="Proteomes" id="UP000002736">
    <property type="component" value="Chromosome"/>
</dbReference>
<dbReference type="GO" id="GO:0005524">
    <property type="term" value="F:ATP binding"/>
    <property type="evidence" value="ECO:0007669"/>
    <property type="project" value="UniProtKB-KW"/>
</dbReference>
<dbReference type="GO" id="GO:0004781">
    <property type="term" value="F:sulfate adenylyltransferase (ATP) activity"/>
    <property type="evidence" value="ECO:0007669"/>
    <property type="project" value="UniProtKB-UniRule"/>
</dbReference>
<dbReference type="GO" id="GO:0070814">
    <property type="term" value="P:hydrogen sulfide biosynthetic process"/>
    <property type="evidence" value="ECO:0007669"/>
    <property type="project" value="UniProtKB-UniRule"/>
</dbReference>
<dbReference type="GO" id="GO:0000103">
    <property type="term" value="P:sulfate assimilation"/>
    <property type="evidence" value="ECO:0007669"/>
    <property type="project" value="UniProtKB-UniRule"/>
</dbReference>
<dbReference type="CDD" id="cd23946">
    <property type="entry name" value="Sulfate_adenylyltransferase_2"/>
    <property type="match status" value="1"/>
</dbReference>
<dbReference type="FunFam" id="3.40.50.620:FF:000002">
    <property type="entry name" value="Sulfate adenylyltransferase subunit 2"/>
    <property type="match status" value="1"/>
</dbReference>
<dbReference type="Gene3D" id="3.40.50.620">
    <property type="entry name" value="HUPs"/>
    <property type="match status" value="1"/>
</dbReference>
<dbReference type="HAMAP" id="MF_00064">
    <property type="entry name" value="Sulf_adenylyltr_sub2"/>
    <property type="match status" value="1"/>
</dbReference>
<dbReference type="InterPro" id="IPR002500">
    <property type="entry name" value="PAPS_reduct_dom"/>
</dbReference>
<dbReference type="InterPro" id="IPR014729">
    <property type="entry name" value="Rossmann-like_a/b/a_fold"/>
</dbReference>
<dbReference type="InterPro" id="IPR011784">
    <property type="entry name" value="SO4_adenylTrfase_ssu"/>
</dbReference>
<dbReference type="InterPro" id="IPR050128">
    <property type="entry name" value="Sulfate_adenylyltrnsfr_sub2"/>
</dbReference>
<dbReference type="NCBIfam" id="TIGR02039">
    <property type="entry name" value="CysD"/>
    <property type="match status" value="1"/>
</dbReference>
<dbReference type="NCBIfam" id="NF003587">
    <property type="entry name" value="PRK05253.1"/>
    <property type="match status" value="1"/>
</dbReference>
<dbReference type="NCBIfam" id="NF009214">
    <property type="entry name" value="PRK12563.1"/>
    <property type="match status" value="1"/>
</dbReference>
<dbReference type="PANTHER" id="PTHR43196">
    <property type="entry name" value="SULFATE ADENYLYLTRANSFERASE SUBUNIT 2"/>
    <property type="match status" value="1"/>
</dbReference>
<dbReference type="PANTHER" id="PTHR43196:SF1">
    <property type="entry name" value="SULFATE ADENYLYLTRANSFERASE SUBUNIT 2"/>
    <property type="match status" value="1"/>
</dbReference>
<dbReference type="Pfam" id="PF01507">
    <property type="entry name" value="PAPS_reduct"/>
    <property type="match status" value="1"/>
</dbReference>
<dbReference type="PIRSF" id="PIRSF002936">
    <property type="entry name" value="CysDAde_trans"/>
    <property type="match status" value="1"/>
</dbReference>
<dbReference type="SUPFAM" id="SSF52402">
    <property type="entry name" value="Adenine nucleotide alpha hydrolases-like"/>
    <property type="match status" value="1"/>
</dbReference>
<feature type="chain" id="PRO_1000202402" description="Sulfate adenylyltransferase subunit 2">
    <location>
        <begin position="1"/>
        <end position="302"/>
    </location>
</feature>
<protein>
    <recommendedName>
        <fullName evidence="1">Sulfate adenylyltransferase subunit 2</fullName>
        <ecNumber evidence="1">2.7.7.4</ecNumber>
    </recommendedName>
    <alternativeName>
        <fullName evidence="1">ATP-sulfurylase small subunit</fullName>
    </alternativeName>
    <alternativeName>
        <fullName evidence="1">Sulfate adenylate transferase</fullName>
        <shortName evidence="1">SAT</shortName>
    </alternativeName>
</protein>
<gene>
    <name evidence="1" type="primary">cysD</name>
    <name type="ordered locus">PC1_3361</name>
</gene>
<organism>
    <name type="scientific">Pectobacterium carotovorum subsp. carotovorum (strain PC1)</name>
    <dbReference type="NCBI Taxonomy" id="561230"/>
    <lineage>
        <taxon>Bacteria</taxon>
        <taxon>Pseudomonadati</taxon>
        <taxon>Pseudomonadota</taxon>
        <taxon>Gammaproteobacteria</taxon>
        <taxon>Enterobacterales</taxon>
        <taxon>Pectobacteriaceae</taxon>
        <taxon>Pectobacterium</taxon>
    </lineage>
</organism>
<comment type="function">
    <text evidence="1">With CysN forms the ATP sulfurylase (ATPS) that catalyzes the adenylation of sulfate producing adenosine 5'-phosphosulfate (APS) and diphosphate, the first enzymatic step in sulfur assimilation pathway. APS synthesis involves the formation of a high-energy phosphoric-sulfuric acid anhydride bond driven by GTP hydrolysis by CysN coupled to ATP hydrolysis by CysD.</text>
</comment>
<comment type="catalytic activity">
    <reaction evidence="1">
        <text>sulfate + ATP + H(+) = adenosine 5'-phosphosulfate + diphosphate</text>
        <dbReference type="Rhea" id="RHEA:18133"/>
        <dbReference type="ChEBI" id="CHEBI:15378"/>
        <dbReference type="ChEBI" id="CHEBI:16189"/>
        <dbReference type="ChEBI" id="CHEBI:30616"/>
        <dbReference type="ChEBI" id="CHEBI:33019"/>
        <dbReference type="ChEBI" id="CHEBI:58243"/>
        <dbReference type="EC" id="2.7.7.4"/>
    </reaction>
</comment>
<comment type="pathway">
    <text evidence="1">Sulfur metabolism; hydrogen sulfide biosynthesis; sulfite from sulfate: step 1/3.</text>
</comment>
<comment type="subunit">
    <text evidence="1">Heterodimer composed of CysD, the smaller subunit, and CysN.</text>
</comment>
<comment type="similarity">
    <text evidence="1">Belongs to the PAPS reductase family. CysD subfamily.</text>
</comment>
<sequence length="302" mass="35105">MDEKRLTHLRQLEAESIHIIREVAAEFSNPVMMYSIGKDSSVMLHLARKAFYPGSLPFPLLHVDTGWKFREMYEFRDRTAKAYGCELLVHRNPQGEALGINPFVHGSAKHTDIMKTEGLKQALDKYGFDAAFGGARRDEEKSRAKERIYSFRDRFHRWDPKNQRPELWHNYNGQINKGESIRVFPLSNWTELDIWQYIYLENIDIVPLYLAAPRPVLERDGMLLMVDDDRIDLQPGEVIEQRMVRFRTLGCWPLTGAVASEAQTLPEIIEEMLVSTTSERQGRVIDRDQAGSMELKKRQGYF</sequence>
<proteinExistence type="inferred from homology"/>
<keyword id="KW-0067">ATP-binding</keyword>
<keyword id="KW-0547">Nucleotide-binding</keyword>
<keyword id="KW-0548">Nucleotidyltransferase</keyword>
<keyword id="KW-0808">Transferase</keyword>
<reference key="1">
    <citation type="submission" date="2009-07" db="EMBL/GenBank/DDBJ databases">
        <title>Complete sequence of Pectobacterium carotovorum subsp. carotovorum PC1.</title>
        <authorList>
            <consortium name="US DOE Joint Genome Institute"/>
            <person name="Lucas S."/>
            <person name="Copeland A."/>
            <person name="Lapidus A."/>
            <person name="Glavina del Rio T."/>
            <person name="Tice H."/>
            <person name="Bruce D."/>
            <person name="Goodwin L."/>
            <person name="Pitluck S."/>
            <person name="Munk A.C."/>
            <person name="Brettin T."/>
            <person name="Detter J.C."/>
            <person name="Han C."/>
            <person name="Tapia R."/>
            <person name="Larimer F."/>
            <person name="Land M."/>
            <person name="Hauser L."/>
            <person name="Kyrpides N."/>
            <person name="Mikhailova N."/>
            <person name="Balakrishnan V."/>
            <person name="Glasner J."/>
            <person name="Perna N.T."/>
        </authorList>
    </citation>
    <scope>NUCLEOTIDE SEQUENCE [LARGE SCALE GENOMIC DNA]</scope>
    <source>
        <strain>PC1</strain>
    </source>
</reference>
<name>CYSD_PECCP</name>